<organism>
    <name type="scientific">Stutzerimonas stutzeri</name>
    <name type="common">Pseudomonas stutzeri</name>
    <dbReference type="NCBI Taxonomy" id="316"/>
    <lineage>
        <taxon>Bacteria</taxon>
        <taxon>Pseudomonadati</taxon>
        <taxon>Pseudomonadota</taxon>
        <taxon>Gammaproteobacteria</taxon>
        <taxon>Pseudomonadales</taxon>
        <taxon>Pseudomonadaceae</taxon>
        <taxon>Stutzerimonas</taxon>
    </lineage>
</organism>
<keyword id="KW-0456">Lyase</keyword>
<feature type="chain" id="PRO_0000021816" description="Siroheme decarboxylase NirG subunit">
    <location>
        <begin position="1"/>
        <end position="147"/>
    </location>
</feature>
<dbReference type="EC" id="4.1.1.111" evidence="1"/>
<dbReference type="EMBL" id="X53676">
    <property type="protein sequence ID" value="CAA90581.1"/>
    <property type="molecule type" value="Genomic_DNA"/>
</dbReference>
<dbReference type="PIR" id="S68351">
    <property type="entry name" value="S68351"/>
</dbReference>
<dbReference type="RefSeq" id="WP_003279931.1">
    <property type="nucleotide sequence ID" value="NZ_CP036186.1"/>
</dbReference>
<dbReference type="SMR" id="Q52524"/>
<dbReference type="GO" id="GO:0016829">
    <property type="term" value="F:lyase activity"/>
    <property type="evidence" value="ECO:0007669"/>
    <property type="project" value="UniProtKB-KW"/>
</dbReference>
<dbReference type="FunFam" id="3.30.70.3460:FF:000001">
    <property type="entry name" value="Heme d1 biosynthesis protein NirG"/>
    <property type="match status" value="1"/>
</dbReference>
<dbReference type="Gene3D" id="3.30.70.3460">
    <property type="match status" value="1"/>
</dbReference>
<dbReference type="Gene3D" id="1.10.10.10">
    <property type="entry name" value="Winged helix-like DNA-binding domain superfamily/Winged helix DNA-binding domain"/>
    <property type="match status" value="1"/>
</dbReference>
<dbReference type="InterPro" id="IPR040523">
    <property type="entry name" value="AsnC_trans_reg2"/>
</dbReference>
<dbReference type="InterPro" id="IPR050684">
    <property type="entry name" value="HTH-Siroheme_Decarb"/>
</dbReference>
<dbReference type="InterPro" id="IPR053953">
    <property type="entry name" value="NirdL-like_HTH"/>
</dbReference>
<dbReference type="InterPro" id="IPR019888">
    <property type="entry name" value="Tscrpt_reg_AsnC-like"/>
</dbReference>
<dbReference type="InterPro" id="IPR019885">
    <property type="entry name" value="Tscrpt_reg_HTH_AsnC-type_CS"/>
</dbReference>
<dbReference type="InterPro" id="IPR036388">
    <property type="entry name" value="WH-like_DNA-bd_sf"/>
</dbReference>
<dbReference type="PANTHER" id="PTHR43413:SF1">
    <property type="entry name" value="SIROHEME DECARBOXYLASE NIRL SUBUNIT"/>
    <property type="match status" value="1"/>
</dbReference>
<dbReference type="PANTHER" id="PTHR43413">
    <property type="entry name" value="TRANSCRIPTIONAL REGULATOR, ASNC FAMILY"/>
    <property type="match status" value="1"/>
</dbReference>
<dbReference type="Pfam" id="PF17805">
    <property type="entry name" value="AsnC_trans_reg2"/>
    <property type="match status" value="1"/>
</dbReference>
<dbReference type="Pfam" id="PF22451">
    <property type="entry name" value="NirdL-like_HTH"/>
    <property type="match status" value="1"/>
</dbReference>
<dbReference type="SMART" id="SM00344">
    <property type="entry name" value="HTH_ASNC"/>
    <property type="match status" value="1"/>
</dbReference>
<protein>
    <recommendedName>
        <fullName evidence="1">Siroheme decarboxylase NirG subunit</fullName>
        <ecNumber evidence="1">4.1.1.111</ecNumber>
    </recommendedName>
</protein>
<reference key="1">
    <citation type="journal article" date="1995" name="Eur. J. Biochem.">
        <title>Resolution of the nirD locus for heme d1 synthesis of cytochrome cd1 (respiratory nitrite reductase) from Pseudomonas stutzeri.</title>
        <authorList>
            <person name="Palmedo G."/>
            <person name="Seither P."/>
            <person name="Koerner H."/>
            <person name="Matthews J.C."/>
            <person name="Burkhalter R.S."/>
            <person name="Timkovich R."/>
            <person name="Zumft W.G."/>
        </authorList>
    </citation>
    <scope>NUCLEOTIDE SEQUENCE [GENOMIC DNA]</scope>
    <scope>DISRUPTION PHENOTYPE</scope>
    <source>
        <strain>ATCC 14405 / JCM 20778 / CIP 107696 / IAM 12931 / LMG 2243 / NCIMB 568 / Baumann 218 / ZoBell 632</strain>
    </source>
</reference>
<evidence type="ECO:0000250" key="1">
    <source>
        <dbReference type="UniProtKB" id="I6TCK3"/>
    </source>
</evidence>
<evidence type="ECO:0000269" key="2">
    <source>
    </source>
</evidence>
<evidence type="ECO:0000303" key="3">
    <source>
    </source>
</evidence>
<evidence type="ECO:0000305" key="4"/>
<sequence length="147" mass="16566">MDELDRQLINRLQHGLPLVRHPWEALAEELGSTAEVLRLRVQALLDDGTLTRFGPMFDIDRLGGAFTLAALSVPEARFDAVAAQLEAMPEVAHNYRREHQWNMWFVLGCETPQGITETIARIEAQTGLTVLNLPKEETFHVGLHFPV</sequence>
<accession>Q52524</accession>
<proteinExistence type="inferred from homology"/>
<gene>
    <name evidence="3" type="primary">nirG</name>
</gene>
<comment type="function">
    <text evidence="1">Involved in heme d1 biosynthesis. Catalyzes the decarboxylation of siroheme into didecarboxysiroheme.</text>
</comment>
<comment type="catalytic activity">
    <reaction evidence="1">
        <text>siroheme + 2 H(+) = 12,18-didecarboxysiroheme + 2 CO2</text>
        <dbReference type="Rhea" id="RHEA:19093"/>
        <dbReference type="ChEBI" id="CHEBI:15378"/>
        <dbReference type="ChEBI" id="CHEBI:16526"/>
        <dbReference type="ChEBI" id="CHEBI:60052"/>
        <dbReference type="ChEBI" id="CHEBI:140497"/>
        <dbReference type="EC" id="4.1.1.111"/>
    </reaction>
</comment>
<comment type="pathway">
    <text evidence="1">Porphyrin-containing compound metabolism.</text>
</comment>
<comment type="subunit">
    <text evidence="1">Probably forms a complex composed of NirD, NirL, NirG and NirH. All proteins are required for the total conversion of siroheme to didecarboxysiroheme.</text>
</comment>
<comment type="disruption phenotype">
    <text evidence="2">Insertional mutagenesis results in the loss of respiratory nitrite reductase activity in vivo and in vitro. Mutant strains synthesize a periplasmic cytochrome cd1 that lacks heme d1.</text>
</comment>
<comment type="similarity">
    <text evidence="4">Belongs to the Ahb/Nir family.</text>
</comment>
<name>NIRG_STUST</name>